<comment type="catalytic activity">
    <reaction evidence="1">
        <text>L-glutamine + H2O = L-glutamate + NH4(+)</text>
        <dbReference type="Rhea" id="RHEA:15889"/>
        <dbReference type="ChEBI" id="CHEBI:15377"/>
        <dbReference type="ChEBI" id="CHEBI:28938"/>
        <dbReference type="ChEBI" id="CHEBI:29985"/>
        <dbReference type="ChEBI" id="CHEBI:58359"/>
        <dbReference type="EC" id="3.5.1.2"/>
    </reaction>
</comment>
<comment type="subunit">
    <text evidence="1">Homotetramer.</text>
</comment>
<comment type="similarity">
    <text evidence="1">Belongs to the glutaminase family.</text>
</comment>
<proteinExistence type="inferred from homology"/>
<accession>B4T5R8</accession>
<dbReference type="EC" id="3.5.1.2" evidence="1"/>
<dbReference type="EMBL" id="CP001113">
    <property type="protein sequence ID" value="ACF61906.1"/>
    <property type="molecule type" value="Genomic_DNA"/>
</dbReference>
<dbReference type="SMR" id="B4T5R8"/>
<dbReference type="KEGG" id="see:SNSL254_A1638"/>
<dbReference type="HOGENOM" id="CLU_027932_1_1_6"/>
<dbReference type="Proteomes" id="UP000008824">
    <property type="component" value="Chromosome"/>
</dbReference>
<dbReference type="GO" id="GO:0004359">
    <property type="term" value="F:glutaminase activity"/>
    <property type="evidence" value="ECO:0007669"/>
    <property type="project" value="UniProtKB-UniRule"/>
</dbReference>
<dbReference type="GO" id="GO:0006537">
    <property type="term" value="P:glutamate biosynthetic process"/>
    <property type="evidence" value="ECO:0007669"/>
    <property type="project" value="TreeGrafter"/>
</dbReference>
<dbReference type="GO" id="GO:0006543">
    <property type="term" value="P:glutamine catabolic process"/>
    <property type="evidence" value="ECO:0007669"/>
    <property type="project" value="TreeGrafter"/>
</dbReference>
<dbReference type="FunFam" id="3.40.710.10:FF:000005">
    <property type="entry name" value="Glutaminase"/>
    <property type="match status" value="1"/>
</dbReference>
<dbReference type="Gene3D" id="3.40.710.10">
    <property type="entry name" value="DD-peptidase/beta-lactamase superfamily"/>
    <property type="match status" value="1"/>
</dbReference>
<dbReference type="HAMAP" id="MF_00313">
    <property type="entry name" value="Glutaminase"/>
    <property type="match status" value="1"/>
</dbReference>
<dbReference type="InterPro" id="IPR012338">
    <property type="entry name" value="Beta-lactam/transpept-like"/>
</dbReference>
<dbReference type="InterPro" id="IPR015868">
    <property type="entry name" value="Glutaminase"/>
</dbReference>
<dbReference type="NCBIfam" id="TIGR03814">
    <property type="entry name" value="Gln_ase"/>
    <property type="match status" value="1"/>
</dbReference>
<dbReference type="NCBIfam" id="NF002132">
    <property type="entry name" value="PRK00971.1-1"/>
    <property type="match status" value="1"/>
</dbReference>
<dbReference type="NCBIfam" id="NF002133">
    <property type="entry name" value="PRK00971.1-2"/>
    <property type="match status" value="1"/>
</dbReference>
<dbReference type="PANTHER" id="PTHR12544">
    <property type="entry name" value="GLUTAMINASE"/>
    <property type="match status" value="1"/>
</dbReference>
<dbReference type="PANTHER" id="PTHR12544:SF29">
    <property type="entry name" value="GLUTAMINASE"/>
    <property type="match status" value="1"/>
</dbReference>
<dbReference type="Pfam" id="PF04960">
    <property type="entry name" value="Glutaminase"/>
    <property type="match status" value="1"/>
</dbReference>
<dbReference type="SUPFAM" id="SSF56601">
    <property type="entry name" value="beta-lactamase/transpeptidase-like"/>
    <property type="match status" value="1"/>
</dbReference>
<feature type="chain" id="PRO_1000115709" description="Glutaminase">
    <location>
        <begin position="1"/>
        <end position="308"/>
    </location>
</feature>
<feature type="binding site" evidence="1">
    <location>
        <position position="66"/>
    </location>
    <ligand>
        <name>substrate</name>
    </ligand>
</feature>
<feature type="binding site" evidence="1">
    <location>
        <position position="117"/>
    </location>
    <ligand>
        <name>substrate</name>
    </ligand>
</feature>
<feature type="binding site" evidence="1">
    <location>
        <position position="161"/>
    </location>
    <ligand>
        <name>substrate</name>
    </ligand>
</feature>
<feature type="binding site" evidence="1">
    <location>
        <position position="168"/>
    </location>
    <ligand>
        <name>substrate</name>
    </ligand>
</feature>
<feature type="binding site" evidence="1">
    <location>
        <position position="192"/>
    </location>
    <ligand>
        <name>substrate</name>
    </ligand>
</feature>
<feature type="binding site" evidence="1">
    <location>
        <position position="244"/>
    </location>
    <ligand>
        <name>substrate</name>
    </ligand>
</feature>
<feature type="binding site" evidence="1">
    <location>
        <position position="262"/>
    </location>
    <ligand>
        <name>substrate</name>
    </ligand>
</feature>
<evidence type="ECO:0000255" key="1">
    <source>
        <dbReference type="HAMAP-Rule" id="MF_00313"/>
    </source>
</evidence>
<organism>
    <name type="scientific">Salmonella newport (strain SL254)</name>
    <dbReference type="NCBI Taxonomy" id="423368"/>
    <lineage>
        <taxon>Bacteria</taxon>
        <taxon>Pseudomonadati</taxon>
        <taxon>Pseudomonadota</taxon>
        <taxon>Gammaproteobacteria</taxon>
        <taxon>Enterobacterales</taxon>
        <taxon>Enterobacteriaceae</taxon>
        <taxon>Salmonella</taxon>
    </lineage>
</organism>
<reference key="1">
    <citation type="journal article" date="2011" name="J. Bacteriol.">
        <title>Comparative genomics of 28 Salmonella enterica isolates: evidence for CRISPR-mediated adaptive sublineage evolution.</title>
        <authorList>
            <person name="Fricke W.F."/>
            <person name="Mammel M.K."/>
            <person name="McDermott P.F."/>
            <person name="Tartera C."/>
            <person name="White D.G."/>
            <person name="Leclerc J.E."/>
            <person name="Ravel J."/>
            <person name="Cebula T.A."/>
        </authorList>
    </citation>
    <scope>NUCLEOTIDE SEQUENCE [LARGE SCALE GENOMIC DNA]</scope>
    <source>
        <strain>SL254</strain>
    </source>
</reference>
<gene>
    <name evidence="1" type="primary">glsA</name>
    <name type="ordered locus">SNSL254_A1638</name>
</gene>
<keyword id="KW-0378">Hydrolase</keyword>
<name>GLSA_SALNS</name>
<sequence>MARAMDNAILETILQRVRPLIGQGKVADYIPALASVEGSKLGIAICTVDGQHYQAGDAHERFSIQSISKVLSLVVAMRHYPEEEIWQRVGKDPSGSPFNSLVQLEMEQGIPRNPFINAGALVVCDMLQGRLSAPRQRMLEVVRALCGVSDITYDATVARSEFEHSARNAAIAWLMKSFGNFHHDVPTVLQNYFHYCALKMSCMELARTFVFLANQGEAFHLDEPVVTPMQARQINALMATSGMYQNAGEFAWRVGLPAKSGVGGGIVAIVPHEMAIAVWSPELDPAGNSLAGIAALEQLTQTLGRSVY</sequence>
<protein>
    <recommendedName>
        <fullName evidence="1">Glutaminase</fullName>
        <ecNumber evidence="1">3.5.1.2</ecNumber>
    </recommendedName>
</protein>